<comment type="similarity">
    <text evidence="1">Belongs to the UPF0434 family.</text>
</comment>
<gene>
    <name evidence="1" type="primary">ycaR</name>
    <name type="ordered locus">ECED1_0947</name>
</gene>
<evidence type="ECO:0000255" key="1">
    <source>
        <dbReference type="HAMAP-Rule" id="MF_01187"/>
    </source>
</evidence>
<dbReference type="EMBL" id="CU928162">
    <property type="protein sequence ID" value="CAR07149.1"/>
    <property type="molecule type" value="Genomic_DNA"/>
</dbReference>
<dbReference type="RefSeq" id="WP_000350051.1">
    <property type="nucleotide sequence ID" value="NC_011745.1"/>
</dbReference>
<dbReference type="SMR" id="B7MS35"/>
<dbReference type="KEGG" id="ecq:ECED1_0947"/>
<dbReference type="HOGENOM" id="CLU_155659_3_1_6"/>
<dbReference type="Proteomes" id="UP000000748">
    <property type="component" value="Chromosome"/>
</dbReference>
<dbReference type="GO" id="GO:0005829">
    <property type="term" value="C:cytosol"/>
    <property type="evidence" value="ECO:0007669"/>
    <property type="project" value="TreeGrafter"/>
</dbReference>
<dbReference type="FunFam" id="2.20.25.10:FF:000002">
    <property type="entry name" value="UPF0434 protein YcaR"/>
    <property type="match status" value="1"/>
</dbReference>
<dbReference type="Gene3D" id="2.20.25.10">
    <property type="match status" value="1"/>
</dbReference>
<dbReference type="HAMAP" id="MF_01187">
    <property type="entry name" value="UPF0434"/>
    <property type="match status" value="1"/>
</dbReference>
<dbReference type="InterPro" id="IPR005651">
    <property type="entry name" value="Trm112-like"/>
</dbReference>
<dbReference type="NCBIfam" id="NF008806">
    <property type="entry name" value="PRK11827.1"/>
    <property type="match status" value="1"/>
</dbReference>
<dbReference type="PANTHER" id="PTHR33505:SF4">
    <property type="entry name" value="PROTEIN PREY, MITOCHONDRIAL"/>
    <property type="match status" value="1"/>
</dbReference>
<dbReference type="PANTHER" id="PTHR33505">
    <property type="entry name" value="ZGC:162634"/>
    <property type="match status" value="1"/>
</dbReference>
<dbReference type="Pfam" id="PF03966">
    <property type="entry name" value="Trm112p"/>
    <property type="match status" value="1"/>
</dbReference>
<dbReference type="SUPFAM" id="SSF158997">
    <property type="entry name" value="Trm112p-like"/>
    <property type="match status" value="1"/>
</dbReference>
<protein>
    <recommendedName>
        <fullName evidence="1">UPF0434 protein YcaR</fullName>
    </recommendedName>
</protein>
<proteinExistence type="inferred from homology"/>
<sequence>MDHRLLEIIACPVCNGKLWYNQEKQEIICKLDNLAFPLRDGIPVLLETEARVLTADESKS</sequence>
<feature type="chain" id="PRO_1000164484" description="UPF0434 protein YcaR">
    <location>
        <begin position="1"/>
        <end position="60"/>
    </location>
</feature>
<name>YCAR_ECO81</name>
<organism>
    <name type="scientific">Escherichia coli O81 (strain ED1a)</name>
    <dbReference type="NCBI Taxonomy" id="585397"/>
    <lineage>
        <taxon>Bacteria</taxon>
        <taxon>Pseudomonadati</taxon>
        <taxon>Pseudomonadota</taxon>
        <taxon>Gammaproteobacteria</taxon>
        <taxon>Enterobacterales</taxon>
        <taxon>Enterobacteriaceae</taxon>
        <taxon>Escherichia</taxon>
    </lineage>
</organism>
<accession>B7MS35</accession>
<reference key="1">
    <citation type="journal article" date="2009" name="PLoS Genet.">
        <title>Organised genome dynamics in the Escherichia coli species results in highly diverse adaptive paths.</title>
        <authorList>
            <person name="Touchon M."/>
            <person name="Hoede C."/>
            <person name="Tenaillon O."/>
            <person name="Barbe V."/>
            <person name="Baeriswyl S."/>
            <person name="Bidet P."/>
            <person name="Bingen E."/>
            <person name="Bonacorsi S."/>
            <person name="Bouchier C."/>
            <person name="Bouvet O."/>
            <person name="Calteau A."/>
            <person name="Chiapello H."/>
            <person name="Clermont O."/>
            <person name="Cruveiller S."/>
            <person name="Danchin A."/>
            <person name="Diard M."/>
            <person name="Dossat C."/>
            <person name="Karoui M.E."/>
            <person name="Frapy E."/>
            <person name="Garry L."/>
            <person name="Ghigo J.M."/>
            <person name="Gilles A.M."/>
            <person name="Johnson J."/>
            <person name="Le Bouguenec C."/>
            <person name="Lescat M."/>
            <person name="Mangenot S."/>
            <person name="Martinez-Jehanne V."/>
            <person name="Matic I."/>
            <person name="Nassif X."/>
            <person name="Oztas S."/>
            <person name="Petit M.A."/>
            <person name="Pichon C."/>
            <person name="Rouy Z."/>
            <person name="Ruf C.S."/>
            <person name="Schneider D."/>
            <person name="Tourret J."/>
            <person name="Vacherie B."/>
            <person name="Vallenet D."/>
            <person name="Medigue C."/>
            <person name="Rocha E.P.C."/>
            <person name="Denamur E."/>
        </authorList>
    </citation>
    <scope>NUCLEOTIDE SEQUENCE [LARGE SCALE GENOMIC DNA]</scope>
    <source>
        <strain>ED1a</strain>
    </source>
</reference>